<sequence length="137" mass="15173">MAYCRQEGKDRIIFVTKEDHETPSNAELVADDPNDPYEEHGLILPNGDINWNCPCLGGMASGPCGEQFKAAFSCFHYSKEDVKGSDCVDQFRAMQECMQKYPDLYPQEEEEEEEQPADPLPEAASEASATKEAAASS</sequence>
<accession>Q2KHZ4</accession>
<name>MIA40_BOVIN</name>
<organism>
    <name type="scientific">Bos taurus</name>
    <name type="common">Bovine</name>
    <dbReference type="NCBI Taxonomy" id="9913"/>
    <lineage>
        <taxon>Eukaryota</taxon>
        <taxon>Metazoa</taxon>
        <taxon>Chordata</taxon>
        <taxon>Craniata</taxon>
        <taxon>Vertebrata</taxon>
        <taxon>Euteleostomi</taxon>
        <taxon>Mammalia</taxon>
        <taxon>Eutheria</taxon>
        <taxon>Laurasiatheria</taxon>
        <taxon>Artiodactyla</taxon>
        <taxon>Ruminantia</taxon>
        <taxon>Pecora</taxon>
        <taxon>Bovidae</taxon>
        <taxon>Bovinae</taxon>
        <taxon>Bos</taxon>
    </lineage>
</organism>
<keyword id="KW-1015">Disulfide bond</keyword>
<keyword id="KW-0496">Mitochondrion</keyword>
<keyword id="KW-0560">Oxidoreductase</keyword>
<keyword id="KW-0653">Protein transport</keyword>
<keyword id="KW-0676">Redox-active center</keyword>
<keyword id="KW-1185">Reference proteome</keyword>
<keyword id="KW-0811">Translocation</keyword>
<keyword id="KW-0813">Transport</keyword>
<proteinExistence type="evidence at transcript level"/>
<comment type="function">
    <text evidence="2">Central component of a redox-sensitive mitochondrial intermembrane space import machinery which is required for the biogenesis of respiratory chain complexes. Functions as a chaperone and catalyzes the formation of disulfide bonds in substrate proteins, such as COX17, COX19, MICU1 and COA7. Required for the import and folding of small cysteine-containing proteins (small Tim) in the mitochondrial intermembrane space (IMS). Required for the import of COA7 in the IMS. Precursor proteins to be imported into the IMS are translocated in their reduced form into the mitochondria. The oxidized form of CHCHD4/MIA40 forms a transient intermolecular disulfide bridge with the reduced precursor protein, resulting in oxidation of the precursor protein that now contains an intramolecular disulfide bond and is able to undergo folding in the IMS. Reduced CHCHD4/MIA40 is then reoxidized by GFER/ERV1 via a disulfide relay system. Mediates formation of disulfide bond in MICU1 in the IMS, promoting formation of the MICU1-MICU2 heterodimer that regulates mitochondrial calcium uptake.</text>
</comment>
<comment type="subunit">
    <text evidence="2">Monomer. Can form homooligomers. Interacts with GFER and forms transient disulfide bonds with GFER. Interacts with MICU1. Interacts with COX19 forming transient intermolecular disulfide bridges. Interacts with COA7 through transient intermolecular disulfide bonds. Interacts with AIFM1; the interaction increases in presence of NADH. Interacts with NDUFB10.</text>
</comment>
<comment type="subcellular location">
    <subcellularLocation>
        <location evidence="2">Mitochondrion intermembrane space</location>
    </subcellularLocation>
</comment>
<comment type="domain">
    <text evidence="1">The CHCH domain contains a conserved twin Cys-X(9)-Cys motif which is required for import and stability of MIA40 in mitochondria.</text>
</comment>
<comment type="PTM">
    <text evidence="1">Forms intrachain disulfide bridges, but exists in different redox states.</text>
</comment>
<reference key="1">
    <citation type="submission" date="2006-01" db="EMBL/GenBank/DDBJ databases">
        <authorList>
            <consortium name="NIH - Mammalian Gene Collection (MGC) project"/>
        </authorList>
    </citation>
    <scope>NUCLEOTIDE SEQUENCE [LARGE SCALE MRNA]</scope>
    <source>
        <strain>Hereford</strain>
        <tissue>Pancreas</tissue>
    </source>
</reference>
<dbReference type="EMBL" id="BC112827">
    <property type="protein sequence ID" value="AAI12828.1"/>
    <property type="molecule type" value="mRNA"/>
</dbReference>
<dbReference type="RefSeq" id="NP_001039624.1">
    <property type="nucleotide sequence ID" value="NM_001046159.2"/>
</dbReference>
<dbReference type="SMR" id="Q2KHZ4"/>
<dbReference type="FunCoup" id="Q2KHZ4">
    <property type="interactions" value="1639"/>
</dbReference>
<dbReference type="STRING" id="9913.ENSBTAP00000020635"/>
<dbReference type="PaxDb" id="9913-ENSBTAP00000020635"/>
<dbReference type="Ensembl" id="ENSBTAT00000135549.1">
    <property type="protein sequence ID" value="ENSBTAP00000085012.1"/>
    <property type="gene ID" value="ENSBTAG00000015529.5"/>
</dbReference>
<dbReference type="GeneID" id="513889"/>
<dbReference type="KEGG" id="bta:513889"/>
<dbReference type="CTD" id="131474"/>
<dbReference type="VEuPathDB" id="HostDB:ENSBTAG00000015529"/>
<dbReference type="VGNC" id="VGNC:27273">
    <property type="gene designation" value="CHCHD4"/>
</dbReference>
<dbReference type="eggNOG" id="KOG4149">
    <property type="taxonomic scope" value="Eukaryota"/>
</dbReference>
<dbReference type="GeneTree" id="ENSGT00390000013132"/>
<dbReference type="HOGENOM" id="CLU_127296_1_0_1"/>
<dbReference type="InParanoid" id="Q2KHZ4"/>
<dbReference type="OMA" id="MECAMRT"/>
<dbReference type="OrthoDB" id="7481291at2759"/>
<dbReference type="TreeFam" id="TF314054"/>
<dbReference type="Proteomes" id="UP000009136">
    <property type="component" value="Chromosome 22"/>
</dbReference>
<dbReference type="GO" id="GO:0005758">
    <property type="term" value="C:mitochondrial intermembrane space"/>
    <property type="evidence" value="ECO:0000250"/>
    <property type="project" value="UniProtKB"/>
</dbReference>
<dbReference type="GO" id="GO:0005739">
    <property type="term" value="C:mitochondrion"/>
    <property type="evidence" value="ECO:0000250"/>
    <property type="project" value="UniProtKB"/>
</dbReference>
<dbReference type="GO" id="GO:0015035">
    <property type="term" value="F:protein-disulfide reductase activity"/>
    <property type="evidence" value="ECO:0000250"/>
    <property type="project" value="UniProtKB"/>
</dbReference>
<dbReference type="GO" id="GO:0160203">
    <property type="term" value="P:mitochondrial disulfide relay system"/>
    <property type="evidence" value="ECO:0000250"/>
    <property type="project" value="UniProtKB"/>
</dbReference>
<dbReference type="GO" id="GO:0033108">
    <property type="term" value="P:mitochondrial respiratory chain complex assembly"/>
    <property type="evidence" value="ECO:0000250"/>
    <property type="project" value="UniProtKB"/>
</dbReference>
<dbReference type="GO" id="GO:0045041">
    <property type="term" value="P:protein import into mitochondrial intermembrane space"/>
    <property type="evidence" value="ECO:0000318"/>
    <property type="project" value="GO_Central"/>
</dbReference>
<dbReference type="FunFam" id="1.10.287.2900:FF:000001">
    <property type="entry name" value="mitochondrial intermembrane space import and assembly protein 40"/>
    <property type="match status" value="1"/>
</dbReference>
<dbReference type="Gene3D" id="1.10.287.2900">
    <property type="match status" value="1"/>
</dbReference>
<dbReference type="InterPro" id="IPR010625">
    <property type="entry name" value="CHCH"/>
</dbReference>
<dbReference type="InterPro" id="IPR039289">
    <property type="entry name" value="CHCHD4"/>
</dbReference>
<dbReference type="InterPro" id="IPR009069">
    <property type="entry name" value="Cys_alpha_HP_mot_SF"/>
</dbReference>
<dbReference type="PANTHER" id="PTHR21622">
    <property type="entry name" value="COILED-COIL-HELIX-COILED-COIL-HELIX DOMAIN CONTAINING 4"/>
    <property type="match status" value="1"/>
</dbReference>
<dbReference type="PANTHER" id="PTHR21622:SF0">
    <property type="entry name" value="COILED-COIL-HELIX-COILED-COIL-HELIX DOMAIN CONTAINING 4"/>
    <property type="match status" value="1"/>
</dbReference>
<dbReference type="Pfam" id="PF06747">
    <property type="entry name" value="CHCH"/>
    <property type="match status" value="1"/>
</dbReference>
<dbReference type="SUPFAM" id="SSF47072">
    <property type="entry name" value="Cysteine alpha-hairpin motif"/>
    <property type="match status" value="1"/>
</dbReference>
<dbReference type="PROSITE" id="PS51808">
    <property type="entry name" value="CHCH"/>
    <property type="match status" value="1"/>
</dbReference>
<gene>
    <name type="primary">CHCHD4</name>
    <name type="synonym">MIA40</name>
</gene>
<protein>
    <recommendedName>
        <fullName>Mitochondrial intermembrane space import and assembly protein 40</fullName>
    </recommendedName>
    <alternativeName>
        <fullName>Coiled-coil-helix-coiled-coil-helix domain-containing protein 4</fullName>
    </alternativeName>
</protein>
<feature type="chain" id="PRO_0000235276" description="Mitochondrial intermembrane space import and assembly protein 40">
    <location>
        <begin position="1"/>
        <end position="137"/>
    </location>
</feature>
<feature type="domain" description="CHCH" evidence="3">
    <location>
        <begin position="61"/>
        <end position="105"/>
    </location>
</feature>
<feature type="region of interest" description="Disordered" evidence="4">
    <location>
        <begin position="102"/>
        <end position="137"/>
    </location>
</feature>
<feature type="short sequence motif" description="Cx9C motif 1" evidence="3">
    <location>
        <begin position="64"/>
        <end position="74"/>
    </location>
</feature>
<feature type="short sequence motif" description="Cx9C motif 2" evidence="3">
    <location>
        <begin position="87"/>
        <end position="97"/>
    </location>
</feature>
<feature type="compositionally biased region" description="Acidic residues" evidence="4">
    <location>
        <begin position="106"/>
        <end position="116"/>
    </location>
</feature>
<feature type="compositionally biased region" description="Low complexity" evidence="4">
    <location>
        <begin position="120"/>
        <end position="137"/>
    </location>
</feature>
<feature type="disulfide bond" description="Redox-active" evidence="2">
    <location>
        <begin position="53"/>
        <end position="55"/>
    </location>
</feature>
<feature type="disulfide bond" evidence="3">
    <location>
        <begin position="64"/>
        <end position="97"/>
    </location>
</feature>
<feature type="disulfide bond" evidence="3">
    <location>
        <begin position="74"/>
        <end position="87"/>
    </location>
</feature>
<evidence type="ECO:0000250" key="1"/>
<evidence type="ECO:0000250" key="2">
    <source>
        <dbReference type="UniProtKB" id="Q8N4Q1"/>
    </source>
</evidence>
<evidence type="ECO:0000255" key="3">
    <source>
        <dbReference type="PROSITE-ProRule" id="PRU01150"/>
    </source>
</evidence>
<evidence type="ECO:0000256" key="4">
    <source>
        <dbReference type="SAM" id="MobiDB-lite"/>
    </source>
</evidence>